<reference key="1">
    <citation type="journal article" date="2003" name="Nature">
        <title>Genome divergence in two Prochlorococcus ecotypes reflects oceanic niche differentiation.</title>
        <authorList>
            <person name="Rocap G."/>
            <person name="Larimer F.W."/>
            <person name="Lamerdin J.E."/>
            <person name="Malfatti S."/>
            <person name="Chain P."/>
            <person name="Ahlgren N.A."/>
            <person name="Arellano A."/>
            <person name="Coleman M."/>
            <person name="Hauser L."/>
            <person name="Hess W.R."/>
            <person name="Johnson Z.I."/>
            <person name="Land M.L."/>
            <person name="Lindell D."/>
            <person name="Post A.F."/>
            <person name="Regala W."/>
            <person name="Shah M."/>
            <person name="Shaw S.L."/>
            <person name="Steglich C."/>
            <person name="Sullivan M.B."/>
            <person name="Ting C.S."/>
            <person name="Tolonen A."/>
            <person name="Webb E.A."/>
            <person name="Zinser E.R."/>
            <person name="Chisholm S.W."/>
        </authorList>
    </citation>
    <scope>NUCLEOTIDE SEQUENCE [LARGE SCALE GENOMIC DNA]</scope>
    <source>
        <strain>MIT 9313</strain>
    </source>
</reference>
<keyword id="KW-0963">Cytoplasm</keyword>
<keyword id="KW-0521">NADP</keyword>
<keyword id="KW-0560">Oxidoreductase</keyword>
<keyword id="KW-0671">Queuosine biosynthesis</keyword>
<keyword id="KW-1185">Reference proteome</keyword>
<name>QUEF_PROMM</name>
<dbReference type="EC" id="1.7.1.13" evidence="1"/>
<dbReference type="EMBL" id="BX548175">
    <property type="protein sequence ID" value="CAE21653.1"/>
    <property type="molecule type" value="Genomic_DNA"/>
</dbReference>
<dbReference type="RefSeq" id="WP_011130846.1">
    <property type="nucleotide sequence ID" value="NC_005071.1"/>
</dbReference>
<dbReference type="SMR" id="Q7V5R6"/>
<dbReference type="KEGG" id="pmt:PMT_1478"/>
<dbReference type="eggNOG" id="COG0780">
    <property type="taxonomic scope" value="Bacteria"/>
</dbReference>
<dbReference type="HOGENOM" id="CLU_102489_1_1_3"/>
<dbReference type="OrthoDB" id="9795077at2"/>
<dbReference type="UniPathway" id="UPA00392"/>
<dbReference type="Proteomes" id="UP000001423">
    <property type="component" value="Chromosome"/>
</dbReference>
<dbReference type="GO" id="GO:0005737">
    <property type="term" value="C:cytoplasm"/>
    <property type="evidence" value="ECO:0007669"/>
    <property type="project" value="UniProtKB-SubCell"/>
</dbReference>
<dbReference type="GO" id="GO:0033739">
    <property type="term" value="F:preQ1 synthase activity"/>
    <property type="evidence" value="ECO:0007669"/>
    <property type="project" value="UniProtKB-UniRule"/>
</dbReference>
<dbReference type="GO" id="GO:0008616">
    <property type="term" value="P:queuosine biosynthetic process"/>
    <property type="evidence" value="ECO:0007669"/>
    <property type="project" value="UniProtKB-UniRule"/>
</dbReference>
<dbReference type="GO" id="GO:0006400">
    <property type="term" value="P:tRNA modification"/>
    <property type="evidence" value="ECO:0007669"/>
    <property type="project" value="UniProtKB-UniRule"/>
</dbReference>
<dbReference type="Gene3D" id="3.30.1130.10">
    <property type="match status" value="1"/>
</dbReference>
<dbReference type="HAMAP" id="MF_00818">
    <property type="entry name" value="QueF_type1"/>
    <property type="match status" value="1"/>
</dbReference>
<dbReference type="InterPro" id="IPR043133">
    <property type="entry name" value="GTP-CH-I_C/QueF"/>
</dbReference>
<dbReference type="InterPro" id="IPR050084">
    <property type="entry name" value="NADPH_dep_7-cyano-7-deazaG_red"/>
</dbReference>
<dbReference type="InterPro" id="IPR029500">
    <property type="entry name" value="QueF"/>
</dbReference>
<dbReference type="InterPro" id="IPR016856">
    <property type="entry name" value="QueF_type1"/>
</dbReference>
<dbReference type="NCBIfam" id="TIGR03139">
    <property type="entry name" value="QueF-II"/>
    <property type="match status" value="1"/>
</dbReference>
<dbReference type="PANTHER" id="PTHR34354">
    <property type="entry name" value="NADPH-DEPENDENT 7-CYANO-7-DEAZAGUANINE REDUCTASE"/>
    <property type="match status" value="1"/>
</dbReference>
<dbReference type="PANTHER" id="PTHR34354:SF1">
    <property type="entry name" value="NADPH-DEPENDENT 7-CYANO-7-DEAZAGUANINE REDUCTASE"/>
    <property type="match status" value="1"/>
</dbReference>
<dbReference type="Pfam" id="PF14489">
    <property type="entry name" value="QueF"/>
    <property type="match status" value="1"/>
</dbReference>
<dbReference type="PIRSF" id="PIRSF027377">
    <property type="entry name" value="Nitrile_oxidored_QueF"/>
    <property type="match status" value="1"/>
</dbReference>
<dbReference type="SUPFAM" id="SSF55620">
    <property type="entry name" value="Tetrahydrobiopterin biosynthesis enzymes-like"/>
    <property type="match status" value="1"/>
</dbReference>
<sequence length="135" mass="15263">MSSTQAQASKTLYGERVIAEGELICFDNPRPERPYEISIELPEFTCQCPFSGYPDFAVLRLLYQPGSRVIELKAIKLYVNSYRNCTISHEEAANKILDDLVVACNPVWMQLEADFNPRGNVHTVVRVSHGSRQPC</sequence>
<organism>
    <name type="scientific">Prochlorococcus marinus (strain MIT 9313)</name>
    <dbReference type="NCBI Taxonomy" id="74547"/>
    <lineage>
        <taxon>Bacteria</taxon>
        <taxon>Bacillati</taxon>
        <taxon>Cyanobacteriota</taxon>
        <taxon>Cyanophyceae</taxon>
        <taxon>Synechococcales</taxon>
        <taxon>Prochlorococcaceae</taxon>
        <taxon>Prochlorococcus</taxon>
    </lineage>
</organism>
<comment type="function">
    <text evidence="1">Catalyzes the NADPH-dependent reduction of 7-cyano-7-deazaguanine (preQ0) to 7-aminomethyl-7-deazaguanine (preQ1).</text>
</comment>
<comment type="catalytic activity">
    <reaction evidence="1">
        <text>7-aminomethyl-7-carbaguanine + 2 NADP(+) = 7-cyano-7-deazaguanine + 2 NADPH + 3 H(+)</text>
        <dbReference type="Rhea" id="RHEA:13409"/>
        <dbReference type="ChEBI" id="CHEBI:15378"/>
        <dbReference type="ChEBI" id="CHEBI:45075"/>
        <dbReference type="ChEBI" id="CHEBI:57783"/>
        <dbReference type="ChEBI" id="CHEBI:58349"/>
        <dbReference type="ChEBI" id="CHEBI:58703"/>
        <dbReference type="EC" id="1.7.1.13"/>
    </reaction>
</comment>
<comment type="pathway">
    <text evidence="1">tRNA modification; tRNA-queuosine biosynthesis.</text>
</comment>
<comment type="subcellular location">
    <subcellularLocation>
        <location evidence="1">Cytoplasm</location>
    </subcellularLocation>
</comment>
<comment type="similarity">
    <text evidence="1">Belongs to the GTP cyclohydrolase I family. QueF type 1 subfamily.</text>
</comment>
<accession>Q7V5R6</accession>
<proteinExistence type="inferred from homology"/>
<protein>
    <recommendedName>
        <fullName evidence="1">NADPH-dependent 7-cyano-7-deazaguanine reductase</fullName>
        <ecNumber evidence="1">1.7.1.13</ecNumber>
    </recommendedName>
    <alternativeName>
        <fullName evidence="1">7-cyano-7-carbaguanine reductase</fullName>
    </alternativeName>
    <alternativeName>
        <fullName evidence="1">NADPH-dependent nitrile oxidoreductase</fullName>
    </alternativeName>
    <alternativeName>
        <fullName evidence="1">PreQ(0) reductase</fullName>
    </alternativeName>
</protein>
<evidence type="ECO:0000255" key="1">
    <source>
        <dbReference type="HAMAP-Rule" id="MF_00818"/>
    </source>
</evidence>
<gene>
    <name evidence="1" type="primary">queF</name>
    <name type="ordered locus">PMT_1478</name>
</gene>
<feature type="chain" id="PRO_0000162987" description="NADPH-dependent 7-cyano-7-deazaguanine reductase">
    <location>
        <begin position="1"/>
        <end position="135"/>
    </location>
</feature>
<feature type="active site" description="Thioimide intermediate" evidence="1">
    <location>
        <position position="48"/>
    </location>
</feature>
<feature type="active site" description="Proton donor" evidence="1">
    <location>
        <position position="55"/>
    </location>
</feature>
<feature type="binding site" evidence="1">
    <location>
        <begin position="70"/>
        <end position="72"/>
    </location>
    <ligand>
        <name>substrate</name>
    </ligand>
</feature>
<feature type="binding site" evidence="1">
    <location>
        <begin position="89"/>
        <end position="90"/>
    </location>
    <ligand>
        <name>substrate</name>
    </ligand>
</feature>